<name>TFPI1_HUMAN</name>
<evidence type="ECO:0000255" key="1">
    <source>
        <dbReference type="PROSITE-ProRule" id="PRU00031"/>
    </source>
</evidence>
<evidence type="ECO:0000269" key="2">
    <source>
    </source>
</evidence>
<evidence type="ECO:0000269" key="3">
    <source>
    </source>
</evidence>
<evidence type="ECO:0000269" key="4">
    <source>
    </source>
</evidence>
<evidence type="ECO:0000269" key="5">
    <source>
    </source>
</evidence>
<evidence type="ECO:0000269" key="6">
    <source>
    </source>
</evidence>
<evidence type="ECO:0000269" key="7">
    <source>
    </source>
</evidence>
<evidence type="ECO:0000269" key="8">
    <source>
    </source>
</evidence>
<evidence type="ECO:0000269" key="9">
    <source>
    </source>
</evidence>
<evidence type="ECO:0000269" key="10">
    <source>
    </source>
</evidence>
<evidence type="ECO:0000303" key="11">
    <source>
    </source>
</evidence>
<evidence type="ECO:0000303" key="12">
    <source ref="5"/>
</evidence>
<evidence type="ECO:0000305" key="13"/>
<evidence type="ECO:0007829" key="14">
    <source>
        <dbReference type="PDB" id="1ADZ"/>
    </source>
</evidence>
<evidence type="ECO:0007829" key="15">
    <source>
        <dbReference type="PDB" id="1IRH"/>
    </source>
</evidence>
<evidence type="ECO:0007829" key="16">
    <source>
        <dbReference type="PDB" id="4BQD"/>
    </source>
</evidence>
<evidence type="ECO:0007829" key="17">
    <source>
        <dbReference type="PDB" id="4DTG"/>
    </source>
</evidence>
<evidence type="ECO:0007829" key="18">
    <source>
        <dbReference type="PDB" id="5NMV"/>
    </source>
</evidence>
<evidence type="ECO:0007829" key="19">
    <source>
        <dbReference type="PDB" id="6BX8"/>
    </source>
</evidence>
<evidence type="ECO:0007829" key="20">
    <source>
        <dbReference type="PDB" id="7V1N"/>
    </source>
</evidence>
<gene>
    <name type="primary">TFPI</name>
    <name type="synonym">LACI</name>
    <name type="synonym">TFPI1</name>
</gene>
<protein>
    <recommendedName>
        <fullName>Tissue factor pathway inhibitor</fullName>
        <shortName>TFPI</shortName>
    </recommendedName>
    <alternativeName>
        <fullName>Extrinsic pathway inhibitor</fullName>
        <shortName>EPI</shortName>
    </alternativeName>
    <alternativeName>
        <fullName>Lipoprotein-associated coagulation inhibitor</fullName>
        <shortName>LACI</shortName>
    </alternativeName>
</protein>
<feature type="signal peptide" evidence="3 5 9">
    <location>
        <begin position="1"/>
        <end position="28"/>
    </location>
</feature>
<feature type="chain" id="PRO_0000016871" description="Tissue factor pathway inhibitor" evidence="8">
    <location>
        <begin position="29"/>
        <end position="304"/>
    </location>
</feature>
<feature type="domain" description="BPTI/Kunitz inhibitor 1" evidence="1">
    <location>
        <begin position="54"/>
        <end position="104"/>
    </location>
</feature>
<feature type="domain" description="BPTI/Kunitz inhibitor 2" evidence="1">
    <location>
        <begin position="125"/>
        <end position="175"/>
    </location>
</feature>
<feature type="domain" description="BPTI/Kunitz inhibitor 3" evidence="1">
    <location>
        <begin position="217"/>
        <end position="267"/>
    </location>
</feature>
<feature type="site" description="Reactive bond">
    <location>
        <begin position="64"/>
        <end position="65"/>
    </location>
</feature>
<feature type="site" description="Reactive bond">
    <location>
        <begin position="135"/>
        <end position="136"/>
    </location>
</feature>
<feature type="site" description="Reactive bond">
    <location>
        <begin position="227"/>
        <end position="228"/>
    </location>
</feature>
<feature type="site" description="Not glycosylated">
    <location>
        <position position="256"/>
    </location>
</feature>
<feature type="glycosylation site" description="O-linked (GalNAc...) threonine; partial" evidence="5">
    <location>
        <position position="42"/>
    </location>
</feature>
<feature type="glycosylation site" description="N-linked (GlcNAc...) asparagine" evidence="4 5 10">
    <location>
        <position position="145"/>
    </location>
</feature>
<feature type="glycosylation site" description="N-linked (GlcNAc...) asparagine" evidence="5 10">
    <location>
        <position position="195"/>
    </location>
</feature>
<feature type="glycosylation site" description="O-linked (GalNAc...) serine; partial" evidence="5 10">
    <location>
        <position position="202"/>
    </location>
</feature>
<feature type="glycosylation site" description="O-linked (GalNAc...) threonine" evidence="5 10">
    <location>
        <position position="203"/>
    </location>
</feature>
<feature type="disulfide bond" evidence="1">
    <location>
        <begin position="54"/>
        <end position="104"/>
    </location>
</feature>
<feature type="disulfide bond" evidence="1">
    <location>
        <begin position="63"/>
        <end position="87"/>
    </location>
</feature>
<feature type="disulfide bond" evidence="1">
    <location>
        <begin position="79"/>
        <end position="100"/>
    </location>
</feature>
<feature type="disulfide bond" evidence="1">
    <location>
        <begin position="125"/>
        <end position="175"/>
    </location>
</feature>
<feature type="disulfide bond" evidence="1">
    <location>
        <begin position="134"/>
        <end position="158"/>
    </location>
</feature>
<feature type="disulfide bond" evidence="1">
    <location>
        <begin position="150"/>
        <end position="171"/>
    </location>
</feature>
<feature type="disulfide bond" evidence="1">
    <location>
        <begin position="217"/>
        <end position="267"/>
    </location>
</feature>
<feature type="disulfide bond" evidence="1">
    <location>
        <begin position="226"/>
        <end position="250"/>
    </location>
</feature>
<feature type="disulfide bond" evidence="1">
    <location>
        <begin position="242"/>
        <end position="263"/>
    </location>
</feature>
<feature type="splice variant" id="VSP_003030" description="In isoform Beta." evidence="11 12">
    <original>EFHGPSWCLTPADRGLCRANENRFYYNSVIGKCRPFKYSGCG</original>
    <variation>VTKEGTNDGWKNAAHIYQVFLNAFCIHASMFFLGLDSISCLC</variation>
    <location>
        <begin position="210"/>
        <end position="251"/>
    </location>
</feature>
<feature type="splice variant" id="VSP_003031" description="In isoform Beta." evidence="11 12">
    <location>
        <begin position="252"/>
        <end position="304"/>
    </location>
</feature>
<feature type="sequence variant" id="VAR_012004" description="In dbSNP:rs5940." evidence="2">
    <original>V</original>
    <variation>M</variation>
    <location>
        <position position="292"/>
    </location>
</feature>
<feature type="mutagenesis site" description="Results in resistance to MMP9-mediated cleavage." evidence="6">
    <original>L</original>
    <variation>A</variation>
    <location>
        <position position="49"/>
    </location>
</feature>
<feature type="mutagenesis site" description="Abolishes inhibition of VII(a)/TF.">
    <original>K</original>
    <variation>I</variation>
    <location>
        <position position="64"/>
    </location>
</feature>
<feature type="mutagenesis site" description="Results in resistant to ELANE-mediated cleavage. Results in resistant to ELANE- and CTSG-mediated cleavage; when associated with A-117." evidence="6">
    <original>T</original>
    <variation>F</variation>
    <location>
        <position position="115"/>
    </location>
</feature>
<feature type="mutagenesis site" description="Results in resistant to ELANE- and CTSG-mediated cleavage; when associated with A-115." evidence="6">
    <original>L</original>
    <variation>A</variation>
    <location>
        <position position="117"/>
    </location>
</feature>
<feature type="mutagenesis site" description="Abolishes inhibition of X(a).">
    <original>R</original>
    <variation>L</variation>
    <location>
        <position position="135"/>
    </location>
</feature>
<feature type="mutagenesis site" description="Abolishes inhibition of VII(a)/TF.">
    <original>R</original>
    <variation>L</variation>
    <location>
        <position position="227"/>
    </location>
</feature>
<feature type="strand" evidence="16">
    <location>
        <begin position="31"/>
        <end position="39"/>
    </location>
</feature>
<feature type="helix" evidence="18">
    <location>
        <begin position="51"/>
        <end position="55"/>
    </location>
</feature>
<feature type="strand" evidence="18">
    <location>
        <begin position="67"/>
        <end position="73"/>
    </location>
</feature>
<feature type="turn" evidence="18">
    <location>
        <begin position="74"/>
        <end position="77"/>
    </location>
</feature>
<feature type="strand" evidence="18">
    <location>
        <begin position="78"/>
        <end position="84"/>
    </location>
</feature>
<feature type="strand" evidence="19">
    <location>
        <begin position="86"/>
        <end position="88"/>
    </location>
</feature>
<feature type="strand" evidence="18">
    <location>
        <begin position="94"/>
        <end position="96"/>
    </location>
</feature>
<feature type="helix" evidence="18">
    <location>
        <begin position="97"/>
        <end position="104"/>
    </location>
</feature>
<feature type="strand" evidence="14">
    <location>
        <begin position="112"/>
        <end position="115"/>
    </location>
</feature>
<feature type="helix" evidence="17">
    <location>
        <begin position="123"/>
        <end position="126"/>
    </location>
</feature>
<feature type="strand" evidence="20">
    <location>
        <begin position="133"/>
        <end position="135"/>
    </location>
</feature>
<feature type="strand" evidence="17">
    <location>
        <begin position="138"/>
        <end position="144"/>
    </location>
</feature>
<feature type="turn" evidence="17">
    <location>
        <begin position="145"/>
        <end position="148"/>
    </location>
</feature>
<feature type="strand" evidence="17">
    <location>
        <begin position="149"/>
        <end position="155"/>
    </location>
</feature>
<feature type="strand" evidence="17">
    <location>
        <begin position="157"/>
        <end position="159"/>
    </location>
</feature>
<feature type="strand" evidence="17">
    <location>
        <begin position="165"/>
        <end position="167"/>
    </location>
</feature>
<feature type="helix" evidence="17">
    <location>
        <begin position="168"/>
        <end position="175"/>
    </location>
</feature>
<feature type="strand" evidence="14">
    <location>
        <begin position="178"/>
        <end position="180"/>
    </location>
</feature>
<feature type="strand" evidence="15">
    <location>
        <begin position="215"/>
        <end position="219"/>
    </location>
</feature>
<feature type="strand" evidence="15">
    <location>
        <begin position="224"/>
        <end position="226"/>
    </location>
</feature>
<feature type="strand" evidence="15">
    <location>
        <begin position="232"/>
        <end position="235"/>
    </location>
</feature>
<feature type="turn" evidence="15">
    <location>
        <begin position="237"/>
        <end position="239"/>
    </location>
</feature>
<feature type="strand" evidence="15">
    <location>
        <begin position="241"/>
        <end position="245"/>
    </location>
</feature>
<feature type="strand" evidence="15">
    <location>
        <begin position="257"/>
        <end position="260"/>
    </location>
</feature>
<feature type="helix" evidence="15">
    <location>
        <begin position="261"/>
        <end position="267"/>
    </location>
</feature>
<accession>P10646</accession>
<accession>O95103</accession>
<accession>Q53TS4</accession>
<organism>
    <name type="scientific">Homo sapiens</name>
    <name type="common">Human</name>
    <dbReference type="NCBI Taxonomy" id="9606"/>
    <lineage>
        <taxon>Eukaryota</taxon>
        <taxon>Metazoa</taxon>
        <taxon>Chordata</taxon>
        <taxon>Craniata</taxon>
        <taxon>Vertebrata</taxon>
        <taxon>Euteleostomi</taxon>
        <taxon>Mammalia</taxon>
        <taxon>Eutheria</taxon>
        <taxon>Euarchontoglires</taxon>
        <taxon>Primates</taxon>
        <taxon>Haplorrhini</taxon>
        <taxon>Catarrhini</taxon>
        <taxon>Hominidae</taxon>
        <taxon>Homo</taxon>
    </lineage>
</organism>
<sequence>MIYTMKKVHALWASVCLLLNLAPAPLNADSEEDEEHTIITDTELPPLKLMHSFCAFKADDGPCKAIMKRFFFNIFTRQCEEFIYGGCEGNQNRFESLEECKKMCTRDNANRIIKTTLQQEKPDFCFLEEDPGICRGYITRYFYNNQTKQCERFKYGGCLGNMNNFETLEECKNICEDGPNGFQVDNYGTQLNAVNNSLTPQSTKVPSLFEFHGPSWCLTPADRGLCRANENRFYYNSVIGKCRPFKYSGCGGNENNFTSKQECLRACKKGFIQRISKGGLIKTKRKRKKQRVKIAYEEIFVKNM</sequence>
<keyword id="KW-0002">3D-structure</keyword>
<keyword id="KW-0025">Alternative splicing</keyword>
<keyword id="KW-0094">Blood coagulation</keyword>
<keyword id="KW-0903">Direct protein sequencing</keyword>
<keyword id="KW-1015">Disulfide bond</keyword>
<keyword id="KW-0256">Endoplasmic reticulum</keyword>
<keyword id="KW-0325">Glycoprotein</keyword>
<keyword id="KW-0336">GPI-anchor</keyword>
<keyword id="KW-0356">Hemostasis</keyword>
<keyword id="KW-0449">Lipoprotein</keyword>
<keyword id="KW-0472">Membrane</keyword>
<keyword id="KW-0492">Microsome</keyword>
<keyword id="KW-0646">Protease inhibitor</keyword>
<keyword id="KW-1267">Proteomics identification</keyword>
<keyword id="KW-1185">Reference proteome</keyword>
<keyword id="KW-0677">Repeat</keyword>
<keyword id="KW-0964">Secreted</keyword>
<keyword id="KW-0722">Serine protease inhibitor</keyword>
<keyword id="KW-0732">Signal</keyword>
<reference key="1">
    <citation type="journal article" date="1988" name="J. Biol. Chem.">
        <title>Cloning and characterization of a cDNA coding for the lipoprotein-associated coagulation inhibitor shows that it consists of three tandem Kunitz-type inhibitory domains.</title>
        <authorList>
            <person name="Wun T.-C."/>
            <person name="Kretzmer K.K."/>
            <person name="Girard T.J."/>
            <person name="Miletich J.P."/>
            <person name="Broze G.J. Jr."/>
        </authorList>
    </citation>
    <scope>NUCLEOTIDE SEQUENCE [MRNA] (ISOFORM ALPHA)</scope>
</reference>
<reference key="2">
    <citation type="journal article" date="1989" name="Thromb. Res.">
        <title>Identification of the 1.4 kb and 4.0 kb messages for the lipoprotein associated coagulation inhibitor and expression of the encoded protein.</title>
        <authorList>
            <person name="Girard T.J."/>
            <person name="Warren L.A."/>
            <person name="Novotny W.F."/>
            <person name="Bejcek B.E."/>
            <person name="Miletich J.P."/>
            <person name="Broze G.J. Jr."/>
        </authorList>
    </citation>
    <scope>NUCLEOTIDE SEQUENCE [MRNA] (ISOFORM ALPHA)</scope>
</reference>
<reference key="3">
    <citation type="journal article" date="1991" name="Biochemistry">
        <title>Intron-exon organization of the human gene coding for the lipoprotein-associated coagulation inhibitor: the factor Xa dependent inhibitor of the extrinsic pathway of coagulation.</title>
        <authorList>
            <person name="van der Logt C.P.E."/>
            <person name="Reitsma P.H."/>
            <person name="Bertina R.M."/>
        </authorList>
    </citation>
    <scope>NUCLEOTIDE SEQUENCE [GENOMIC DNA] (ISOFORM ALPHA)</scope>
</reference>
<reference key="4">
    <citation type="journal article" date="1991" name="J. Biol. Chem.">
        <title>Structure of the human lipoprotein-associated coagulation inhibitor gene. Intro/exon gene organization and localization of the gene to chromosome 2.</title>
        <authorList>
            <person name="Girard T.J."/>
            <person name="Eddy R."/>
            <person name="Wesselschmidt R.L."/>
            <person name="Macphail L.A."/>
            <person name="Likert K.M."/>
            <person name="Byers M.G."/>
            <person name="Shows T.B."/>
            <person name="Broze G.J. Jr."/>
        </authorList>
    </citation>
    <scope>NUCLEOTIDE SEQUENCE [GENOMIC DNA] (ISOFORM ALPHA)</scope>
</reference>
<reference key="5">
    <citation type="submission" date="1997-08" db="EMBL/GenBank/DDBJ databases">
        <authorList>
            <person name="Chang J.-Y."/>
            <person name="Monroe D.M."/>
            <person name="Roberts H.R."/>
        </authorList>
    </citation>
    <scope>NUCLEOTIDE SEQUENCE [MRNA] (ISOFORM BETA)</scope>
</reference>
<reference key="6">
    <citation type="submission" date="2003-03" db="EMBL/GenBank/DDBJ databases">
        <authorList>
            <consortium name="SeattleSNPs variation discovery resource"/>
        </authorList>
    </citation>
    <scope>NUCLEOTIDE SEQUENCE [GENOMIC DNA]</scope>
</reference>
<reference key="7">
    <citation type="journal article" date="2005" name="Nature">
        <title>Generation and annotation of the DNA sequences of human chromosomes 2 and 4.</title>
        <authorList>
            <person name="Hillier L.W."/>
            <person name="Graves T.A."/>
            <person name="Fulton R.S."/>
            <person name="Fulton L.A."/>
            <person name="Pepin K.H."/>
            <person name="Minx P."/>
            <person name="Wagner-McPherson C."/>
            <person name="Layman D."/>
            <person name="Wylie K."/>
            <person name="Sekhon M."/>
            <person name="Becker M.C."/>
            <person name="Fewell G.A."/>
            <person name="Delehaunty K.D."/>
            <person name="Miner T.L."/>
            <person name="Nash W.E."/>
            <person name="Kremitzki C."/>
            <person name="Oddy L."/>
            <person name="Du H."/>
            <person name="Sun H."/>
            <person name="Bradshaw-Cordum H."/>
            <person name="Ali J."/>
            <person name="Carter J."/>
            <person name="Cordes M."/>
            <person name="Harris A."/>
            <person name="Isak A."/>
            <person name="van Brunt A."/>
            <person name="Nguyen C."/>
            <person name="Du F."/>
            <person name="Courtney L."/>
            <person name="Kalicki J."/>
            <person name="Ozersky P."/>
            <person name="Abbott S."/>
            <person name="Armstrong J."/>
            <person name="Belter E.A."/>
            <person name="Caruso L."/>
            <person name="Cedroni M."/>
            <person name="Cotton M."/>
            <person name="Davidson T."/>
            <person name="Desai A."/>
            <person name="Elliott G."/>
            <person name="Erb T."/>
            <person name="Fronick C."/>
            <person name="Gaige T."/>
            <person name="Haakenson W."/>
            <person name="Haglund K."/>
            <person name="Holmes A."/>
            <person name="Harkins R."/>
            <person name="Kim K."/>
            <person name="Kruchowski S.S."/>
            <person name="Strong C.M."/>
            <person name="Grewal N."/>
            <person name="Goyea E."/>
            <person name="Hou S."/>
            <person name="Levy A."/>
            <person name="Martinka S."/>
            <person name="Mead K."/>
            <person name="McLellan M.D."/>
            <person name="Meyer R."/>
            <person name="Randall-Maher J."/>
            <person name="Tomlinson C."/>
            <person name="Dauphin-Kohlberg S."/>
            <person name="Kozlowicz-Reilly A."/>
            <person name="Shah N."/>
            <person name="Swearengen-Shahid S."/>
            <person name="Snider J."/>
            <person name="Strong J.T."/>
            <person name="Thompson J."/>
            <person name="Yoakum M."/>
            <person name="Leonard S."/>
            <person name="Pearman C."/>
            <person name="Trani L."/>
            <person name="Radionenko M."/>
            <person name="Waligorski J.E."/>
            <person name="Wang C."/>
            <person name="Rock S.M."/>
            <person name="Tin-Wollam A.-M."/>
            <person name="Maupin R."/>
            <person name="Latreille P."/>
            <person name="Wendl M.C."/>
            <person name="Yang S.-P."/>
            <person name="Pohl C."/>
            <person name="Wallis J.W."/>
            <person name="Spieth J."/>
            <person name="Bieri T.A."/>
            <person name="Berkowicz N."/>
            <person name="Nelson J.O."/>
            <person name="Osborne J."/>
            <person name="Ding L."/>
            <person name="Meyer R."/>
            <person name="Sabo A."/>
            <person name="Shotland Y."/>
            <person name="Sinha P."/>
            <person name="Wohldmann P.E."/>
            <person name="Cook L.L."/>
            <person name="Hickenbotham M.T."/>
            <person name="Eldred J."/>
            <person name="Williams D."/>
            <person name="Jones T.A."/>
            <person name="She X."/>
            <person name="Ciccarelli F.D."/>
            <person name="Izaurralde E."/>
            <person name="Taylor J."/>
            <person name="Schmutz J."/>
            <person name="Myers R.M."/>
            <person name="Cox D.R."/>
            <person name="Huang X."/>
            <person name="McPherson J.D."/>
            <person name="Mardis E.R."/>
            <person name="Clifton S.W."/>
            <person name="Warren W.C."/>
            <person name="Chinwalla A.T."/>
            <person name="Eddy S.R."/>
            <person name="Marra M.A."/>
            <person name="Ovcharenko I."/>
            <person name="Furey T.S."/>
            <person name="Miller W."/>
            <person name="Eichler E.E."/>
            <person name="Bork P."/>
            <person name="Suyama M."/>
            <person name="Torrents D."/>
            <person name="Waterston R.H."/>
            <person name="Wilson R.K."/>
        </authorList>
    </citation>
    <scope>NUCLEOTIDE SEQUENCE [LARGE SCALE GENOMIC DNA]</scope>
</reference>
<reference key="8">
    <citation type="submission" date="2005-07" db="EMBL/GenBank/DDBJ databases">
        <authorList>
            <person name="Mural R.J."/>
            <person name="Istrail S."/>
            <person name="Sutton G.G."/>
            <person name="Florea L."/>
            <person name="Halpern A.L."/>
            <person name="Mobarry C.M."/>
            <person name="Lippert R."/>
            <person name="Walenz B."/>
            <person name="Shatkay H."/>
            <person name="Dew I."/>
            <person name="Miller J.R."/>
            <person name="Flanigan M.J."/>
            <person name="Edwards N.J."/>
            <person name="Bolanos R."/>
            <person name="Fasulo D."/>
            <person name="Halldorsson B.V."/>
            <person name="Hannenhalli S."/>
            <person name="Turner R."/>
            <person name="Yooseph S."/>
            <person name="Lu F."/>
            <person name="Nusskern D.R."/>
            <person name="Shue B.C."/>
            <person name="Zheng X.H."/>
            <person name="Zhong F."/>
            <person name="Delcher A.L."/>
            <person name="Huson D.H."/>
            <person name="Kravitz S.A."/>
            <person name="Mouchard L."/>
            <person name="Reinert K."/>
            <person name="Remington K.A."/>
            <person name="Clark A.G."/>
            <person name="Waterman M.S."/>
            <person name="Eichler E.E."/>
            <person name="Adams M.D."/>
            <person name="Hunkapiller M.W."/>
            <person name="Myers E.W."/>
            <person name="Venter J.C."/>
        </authorList>
    </citation>
    <scope>NUCLEOTIDE SEQUENCE [LARGE SCALE GENOMIC DNA]</scope>
</reference>
<reference key="9">
    <citation type="journal article" date="2004" name="Genome Res.">
        <title>The status, quality, and expansion of the NIH full-length cDNA project: the Mammalian Gene Collection (MGC).</title>
        <authorList>
            <consortium name="The MGC Project Team"/>
        </authorList>
    </citation>
    <scope>NUCLEOTIDE SEQUENCE [LARGE SCALE MRNA] (ISOFORM BETA)</scope>
    <source>
        <tissue>Pancreas</tissue>
    </source>
</reference>
<reference key="10">
    <citation type="journal article" date="2009" name="J. Thromb. Haemost.">
        <title>Biochemical characterization of plasma-derived tissue factor pathway inhibitor: post-translational modification of free, full-length form with particular reference to the sugar chain.</title>
        <authorList>
            <person name="Mori Y."/>
            <person name="Hamuro T."/>
            <person name="Nakashima T."/>
            <person name="Hamamoto T."/>
            <person name="Natsuka S."/>
            <person name="Hase S."/>
            <person name="Iwanaga S."/>
        </authorList>
    </citation>
    <scope>PROTEIN SEQUENCE OF 29-304</scope>
    <scope>IDENTIFICATION BY MASS SPECTROMETRY</scope>
    <scope>GLYCOSYLATION AT THR-42; ASN-145; ASN-195; SER-202 AND THR-203</scope>
</reference>
<reference key="11">
    <citation type="journal article" date="1989" name="J. Biol. Chem.">
        <title>Purification and characterization of the lipoprotein-associated coagulation inhibitor from human plasma.</title>
        <authorList>
            <person name="Novotny W.F."/>
            <person name="Girard T.J."/>
            <person name="Miletich J.P."/>
            <person name="Broze G.J. Jr."/>
        </authorList>
    </citation>
    <scope>PROTEIN SEQUENCE OF 29-50</scope>
</reference>
<reference key="12">
    <citation type="journal article" date="2004" name="Protein Sci.">
        <title>Signal peptide prediction based on analysis of experimentally verified cleavage sites.</title>
        <authorList>
            <person name="Zhang Z."/>
            <person name="Henzel W.J."/>
        </authorList>
    </citation>
    <scope>PROTEIN SEQUENCE OF 29-43</scope>
</reference>
<reference key="13">
    <citation type="journal article" date="1989" name="Nature">
        <title>Functional significance of the Kunitz-type inhibitory domains of lipoprotein-associated coagulation inhibitor.</title>
        <authorList>
            <person name="Girard T.J."/>
            <person name="Warren L.A."/>
            <person name="Novotny W.F."/>
            <person name="Likert K.M."/>
            <person name="Brown S.G."/>
            <person name="Miletich J.P."/>
            <person name="Broze G.J. Jr."/>
        </authorList>
    </citation>
    <scope>INHIBITORY SITES</scope>
    <scope>MUTAGENESIS OF LYS-64; ARG-135 AND ARG-227</scope>
</reference>
<reference key="14">
    <citation type="journal article" date="1996" name="Biochemistry">
        <title>Amino acid sequence and carbohydrate structure of a recombinant human tissue factor pathway inhibitor expressed in Chinese hamster ovary cells: one N- and two O-linked carbohydrate chains are located between Kunitz domains 2 and 3 and one N-linked carbohydrate chain is in Kunitz domain 2.</title>
        <authorList>
            <person name="Nakahara Y."/>
            <person name="Miyata T."/>
            <person name="Hamuro T."/>
            <person name="Funatsu A."/>
            <person name="Miyagi M."/>
            <person name="Tsunasawa S."/>
            <person name="Kato H."/>
        </authorList>
    </citation>
    <scope>GLYCOSYLATION AT ASN-145; ASN-195; SER-202 AND THR-203</scope>
</reference>
<reference key="15">
    <citation type="journal article" date="1990" name="Biochemistry">
        <title>Regulation of coagulation by a multivalent Kunitz-type inhibitor.</title>
        <authorList>
            <person name="Broze G.J. Jr."/>
            <person name="Girard T.J."/>
            <person name="Novotny W.F."/>
        </authorList>
    </citation>
    <scope>REVIEW</scope>
</reference>
<reference key="16">
    <citation type="journal article" date="2005" name="J. Proteome Res.">
        <title>Human plasma N-glycoproteome analysis by immunoaffinity subtraction, hydrazide chemistry, and mass spectrometry.</title>
        <authorList>
            <person name="Liu T."/>
            <person name="Qian W.-J."/>
            <person name="Gritsenko M.A."/>
            <person name="Camp D.G. II"/>
            <person name="Monroe M.E."/>
            <person name="Moore R.J."/>
            <person name="Smith R.D."/>
        </authorList>
    </citation>
    <scope>GLYCOSYLATION [LARGE SCALE ANALYSIS] AT ASN-145</scope>
    <source>
        <tissue>Plasma</tissue>
    </source>
</reference>
<reference key="17">
    <citation type="journal article" date="2010" name="Nat. Med.">
        <title>Reciprocal coupling of coagulation and innate immunity via neutrophil serine proteases.</title>
        <authorList>
            <person name="Massberg S."/>
            <person name="Grahl L."/>
            <person name="von Bruehl M.L."/>
            <person name="Manukyan D."/>
            <person name="Pfeiler S."/>
            <person name="Goosmann C."/>
            <person name="Brinkmann V."/>
            <person name="Lorenz M."/>
            <person name="Bidzhekov K."/>
            <person name="Khandagale A.B."/>
            <person name="Konrad I."/>
            <person name="Kennerknecht E."/>
            <person name="Reges K."/>
            <person name="Holdenrieder S."/>
            <person name="Braun S."/>
            <person name="Reinhardt C."/>
            <person name="Spannagl M."/>
            <person name="Preissner K.T."/>
            <person name="Engelmann B."/>
        </authorList>
    </citation>
    <scope>FUNCTION</scope>
    <scope>MUTAGENESIS OF LEU-49; THR-115 AND LEU-117</scope>
</reference>
<reference key="18">
    <citation type="journal article" date="2011" name="BMC Syst. Biol.">
        <title>Initial characterization of the human central proteome.</title>
        <authorList>
            <person name="Burkard T.R."/>
            <person name="Planyavsky M."/>
            <person name="Kaupe I."/>
            <person name="Breitwieser F.P."/>
            <person name="Buerckstuemmer T."/>
            <person name="Bennett K.L."/>
            <person name="Superti-Furga G."/>
            <person name="Colinge J."/>
        </authorList>
    </citation>
    <scope>IDENTIFICATION BY MASS SPECTROMETRY [LARGE SCALE ANALYSIS]</scope>
</reference>
<reference key="19">
    <citation type="journal article" date="2012" name="Blood">
        <title>TFPIbeta is the GPI-anchored TFPI isoform on human endothelial cells and placental microsomes.</title>
        <authorList>
            <person name="Girard T.J."/>
            <person name="Tuley E."/>
            <person name="Broze G.J. Jr."/>
        </authorList>
    </citation>
    <scope>SUBCELLULAR LOCATION (ISOFORM BETA)</scope>
    <scope>GPI-ANCHOR</scope>
</reference>
<reference key="20">
    <citation type="journal article" date="1997" name="J. Biol. Chem.">
        <title>The three-dimensional structure of recombinant leech-derived tryptase inhibitor in complex with trypsin. Implications for the structure of human mast cell tryptase and its inhibition.</title>
        <authorList>
            <person name="Stubbs M.T."/>
            <person name="Morenweiser R."/>
            <person name="Stuerzebecher J."/>
            <person name="Bauer M."/>
            <person name="Bode W."/>
            <person name="Huber R."/>
            <person name="Piechottka G.P."/>
            <person name="Matschiner G."/>
            <person name="Sommerhoff C.P."/>
            <person name="Fritz H."/>
            <person name="Auerswald E.A."/>
        </authorList>
    </citation>
    <scope>X-RAY CRYSTALLOGRAPHY (2.6 ANGSTROMS) OF 121-178 IN COMPLEX WITH TRYPSIN</scope>
</reference>
<reference key="21">
    <citation type="journal article" date="1997" name="J. Mol. Biol.">
        <title>The second Kunitz domain of human tissue factor pathway inhibitor: cloning, structure determination and interaction with factor Xa.</title>
        <authorList>
            <person name="Burgering M.J.M."/>
            <person name="Orbons L.P.M."/>
            <person name="van der Doelen A."/>
            <person name="Mulders J."/>
            <person name="Theunissen H.J.M."/>
            <person name="Grootenhuis P.D.J."/>
            <person name="Bode W."/>
            <person name="Huber R."/>
            <person name="Stubbs M.T."/>
        </authorList>
    </citation>
    <scope>STRUCTURE BY NMR OF 121-182</scope>
</reference>
<reference key="22">
    <citation type="journal article" date="2002" name="Biochemistry">
        <title>Structural mechanism for heparin-binding of the third Kunitz domain of human tissue factor pathway inhibitor.</title>
        <authorList>
            <person name="Mine S."/>
            <person name="Yamazaki T."/>
            <person name="Miyata T."/>
            <person name="Hara S."/>
            <person name="Kato H."/>
        </authorList>
    </citation>
    <scope>STRUCTURE BY NMR OF 210-270</scope>
</reference>
<reference key="23">
    <citation type="journal article" date="1999" name="Nat. Genet.">
        <title>Characterization of single-nucleotide polymorphisms in coding regions of human genes.</title>
        <authorList>
            <person name="Cargill M."/>
            <person name="Altshuler D."/>
            <person name="Ireland J."/>
            <person name="Sklar P."/>
            <person name="Ardlie K."/>
            <person name="Patil N."/>
            <person name="Shaw N."/>
            <person name="Lane C.R."/>
            <person name="Lim E.P."/>
            <person name="Kalyanaraman N."/>
            <person name="Nemesh J."/>
            <person name="Ziaugra L."/>
            <person name="Friedland L."/>
            <person name="Rolfe A."/>
            <person name="Warrington J."/>
            <person name="Lipshutz R."/>
            <person name="Daley G.Q."/>
            <person name="Lander E.S."/>
        </authorList>
    </citation>
    <scope>VARIANT MET-292</scope>
</reference>
<reference key="24">
    <citation type="journal article" date="1999" name="Nat. Genet.">
        <authorList>
            <person name="Cargill M."/>
            <person name="Altshuler D."/>
            <person name="Ireland J."/>
            <person name="Sklar P."/>
            <person name="Ardlie K."/>
            <person name="Patil N."/>
            <person name="Shaw N."/>
            <person name="Lane C.R."/>
            <person name="Lim E.P."/>
            <person name="Kalyanaraman N."/>
            <person name="Nemesh J."/>
            <person name="Ziaugra L."/>
            <person name="Friedland L."/>
            <person name="Rolfe A."/>
            <person name="Warrington J."/>
            <person name="Lipshutz R."/>
            <person name="Daley G.Q."/>
            <person name="Lander E.S."/>
        </authorList>
    </citation>
    <scope>ERRATUM OF PUBMED:10391209</scope>
</reference>
<comment type="function">
    <text evidence="6">Inhibits factor X (X(a)) directly and, in a Xa-dependent way, inhibits VIIa/tissue factor activity, presumably by forming a quaternary Xa/LACI/VIIa/TF complex. It possesses an antithrombotic action and also the ability to associate with lipoproteins in plasma.</text>
</comment>
<comment type="subcellular location">
    <molecule>Isoform Alpha</molecule>
    <subcellularLocation>
        <location>Secreted</location>
    </subcellularLocation>
</comment>
<comment type="subcellular location">
    <molecule>Isoform Beta</molecule>
    <subcellularLocation>
        <location evidence="7">Microsome membrane</location>
        <topology evidence="7">Lipid-anchor</topology>
        <topology evidence="7">GPI-anchor</topology>
    </subcellularLocation>
</comment>
<comment type="alternative products">
    <event type="alternative splicing"/>
    <isoform>
        <id>P10646-1</id>
        <name>Alpha</name>
        <name>TFPIalpha</name>
        <sequence type="displayed"/>
    </isoform>
    <isoform>
        <id>P10646-2</id>
        <name>Beta</name>
        <name>TFPIbeta</name>
        <sequence type="described" ref="VSP_003030 VSP_003031"/>
    </isoform>
</comment>
<comment type="tissue specificity">
    <text>Mostly in endothelial cells.</text>
</comment>
<comment type="domain">
    <text>This inhibitor contains three inhibitory domains. The first domain interacts with VIIa and TF, the second one with Xa.</text>
</comment>
<comment type="PTM">
    <text evidence="4 5 10">O-glycosylated.</text>
</comment>
<comment type="miscellaneous">
    <molecule>Isoform Beta</molecule>
    <text evidence="13">GPI-anchored.</text>
</comment>
<comment type="online information" name="Wikipedia">
    <link uri="https://en.wikipedia.org/wiki/TFPI"/>
    <text>TFPI entry</text>
</comment>
<dbReference type="EMBL" id="J03225">
    <property type="protein sequence ID" value="AAA52022.1"/>
    <property type="molecule type" value="mRNA"/>
</dbReference>
<dbReference type="EMBL" id="M58650">
    <property type="protein sequence ID" value="AAA59480.1"/>
    <property type="molecule type" value="Genomic_DNA"/>
</dbReference>
<dbReference type="EMBL" id="M58644">
    <property type="protein sequence ID" value="AAA59480.1"/>
    <property type="status" value="JOINED"/>
    <property type="molecule type" value="Genomic_DNA"/>
</dbReference>
<dbReference type="EMBL" id="M58645">
    <property type="protein sequence ID" value="AAA59480.1"/>
    <property type="status" value="JOINED"/>
    <property type="molecule type" value="Genomic_DNA"/>
</dbReference>
<dbReference type="EMBL" id="M58646">
    <property type="protein sequence ID" value="AAA59480.1"/>
    <property type="status" value="JOINED"/>
    <property type="molecule type" value="Genomic_DNA"/>
</dbReference>
<dbReference type="EMBL" id="M58647">
    <property type="protein sequence ID" value="AAA59480.1"/>
    <property type="status" value="JOINED"/>
    <property type="molecule type" value="Genomic_DNA"/>
</dbReference>
<dbReference type="EMBL" id="M58648">
    <property type="protein sequence ID" value="AAA59480.1"/>
    <property type="status" value="JOINED"/>
    <property type="molecule type" value="Genomic_DNA"/>
</dbReference>
<dbReference type="EMBL" id="M58649">
    <property type="protein sequence ID" value="AAA59480.1"/>
    <property type="status" value="JOINED"/>
    <property type="molecule type" value="Genomic_DNA"/>
</dbReference>
<dbReference type="EMBL" id="M59499">
    <property type="protein sequence ID" value="AAA59526.1"/>
    <property type="molecule type" value="Genomic_DNA"/>
</dbReference>
<dbReference type="EMBL" id="M59493">
    <property type="protein sequence ID" value="AAA59526.1"/>
    <property type="status" value="JOINED"/>
    <property type="molecule type" value="Genomic_DNA"/>
</dbReference>
<dbReference type="EMBL" id="M59494">
    <property type="protein sequence ID" value="AAA59526.1"/>
    <property type="status" value="JOINED"/>
    <property type="molecule type" value="Genomic_DNA"/>
</dbReference>
<dbReference type="EMBL" id="M59495">
    <property type="protein sequence ID" value="AAA59526.1"/>
    <property type="status" value="JOINED"/>
    <property type="molecule type" value="Genomic_DNA"/>
</dbReference>
<dbReference type="EMBL" id="M59496">
    <property type="protein sequence ID" value="AAA59526.1"/>
    <property type="status" value="JOINED"/>
    <property type="molecule type" value="Genomic_DNA"/>
</dbReference>
<dbReference type="EMBL" id="M59497">
    <property type="protein sequence ID" value="AAA59526.1"/>
    <property type="status" value="JOINED"/>
    <property type="molecule type" value="Genomic_DNA"/>
</dbReference>
<dbReference type="EMBL" id="M59498">
    <property type="protein sequence ID" value="AAA59526.1"/>
    <property type="status" value="JOINED"/>
    <property type="molecule type" value="Genomic_DNA"/>
</dbReference>
<dbReference type="EMBL" id="AF021834">
    <property type="protein sequence ID" value="AAD01700.1"/>
    <property type="molecule type" value="mRNA"/>
</dbReference>
<dbReference type="EMBL" id="AY263365">
    <property type="protein sequence ID" value="AAO89075.1"/>
    <property type="molecule type" value="Genomic_DNA"/>
</dbReference>
<dbReference type="EMBL" id="AC007319">
    <property type="protein sequence ID" value="AAY14807.1"/>
    <property type="molecule type" value="Genomic_DNA"/>
</dbReference>
<dbReference type="EMBL" id="CH471058">
    <property type="protein sequence ID" value="EAX10921.1"/>
    <property type="molecule type" value="Genomic_DNA"/>
</dbReference>
<dbReference type="EMBL" id="CH471058">
    <property type="protein sequence ID" value="EAX10922.1"/>
    <property type="molecule type" value="Genomic_DNA"/>
</dbReference>
<dbReference type="EMBL" id="BC015514">
    <property type="protein sequence ID" value="AAH15514.1"/>
    <property type="molecule type" value="mRNA"/>
</dbReference>
<dbReference type="CCDS" id="CCDS2294.1">
    <molecule id="P10646-1"/>
</dbReference>
<dbReference type="CCDS" id="CCDS33349.1">
    <molecule id="P10646-2"/>
</dbReference>
<dbReference type="PIR" id="A23712">
    <property type="entry name" value="TIHUGK"/>
</dbReference>
<dbReference type="RefSeq" id="NP_001027452.1">
    <molecule id="P10646-2"/>
    <property type="nucleotide sequence ID" value="NM_001032281.4"/>
</dbReference>
<dbReference type="RefSeq" id="NP_001305870.1">
    <molecule id="P10646-2"/>
    <property type="nucleotide sequence ID" value="NM_001318941.3"/>
</dbReference>
<dbReference type="RefSeq" id="NP_001316168.1">
    <molecule id="P10646-1"/>
    <property type="nucleotide sequence ID" value="NM_001329239.2"/>
</dbReference>
<dbReference type="RefSeq" id="NP_001316169.1">
    <molecule id="P10646-1"/>
    <property type="nucleotide sequence ID" value="NM_001329240.2"/>
</dbReference>
<dbReference type="RefSeq" id="NP_001316170.1">
    <molecule id="P10646-1"/>
    <property type="nucleotide sequence ID" value="NM_001329241.2"/>
</dbReference>
<dbReference type="RefSeq" id="NP_006278.1">
    <molecule id="P10646-1"/>
    <property type="nucleotide sequence ID" value="NM_006287.6"/>
</dbReference>
<dbReference type="RefSeq" id="XP_005246876.1">
    <property type="nucleotide sequence ID" value="XM_005246819.1"/>
</dbReference>
<dbReference type="RefSeq" id="XP_006712783.1">
    <property type="nucleotide sequence ID" value="XM_006712720.3"/>
</dbReference>
<dbReference type="RefSeq" id="XP_011510011.1">
    <property type="nucleotide sequence ID" value="XM_011511709.2"/>
</dbReference>
<dbReference type="RefSeq" id="XP_047301573.1">
    <molecule id="P10646-1"/>
    <property type="nucleotide sequence ID" value="XM_047445617.1"/>
</dbReference>
<dbReference type="RefSeq" id="XP_047301574.1">
    <molecule id="P10646-1"/>
    <property type="nucleotide sequence ID" value="XM_047445618.1"/>
</dbReference>
<dbReference type="RefSeq" id="XP_047301575.1">
    <molecule id="P10646-1"/>
    <property type="nucleotide sequence ID" value="XM_047445619.1"/>
</dbReference>
<dbReference type="RefSeq" id="XP_047301576.1">
    <molecule id="P10646-1"/>
    <property type="nucleotide sequence ID" value="XM_047445620.1"/>
</dbReference>
<dbReference type="RefSeq" id="XP_047301577.1">
    <molecule id="P10646-1"/>
    <property type="nucleotide sequence ID" value="XM_047445621.1"/>
</dbReference>
<dbReference type="RefSeq" id="XP_047301578.1">
    <molecule id="P10646-1"/>
    <property type="nucleotide sequence ID" value="XM_047445622.1"/>
</dbReference>
<dbReference type="RefSeq" id="XP_047301579.1">
    <molecule id="P10646-2"/>
    <property type="nucleotide sequence ID" value="XM_047445623.1"/>
</dbReference>
<dbReference type="RefSeq" id="XP_054199556.1">
    <molecule id="P10646-1"/>
    <property type="nucleotide sequence ID" value="XM_054343581.1"/>
</dbReference>
<dbReference type="RefSeq" id="XP_054199557.1">
    <molecule id="P10646-1"/>
    <property type="nucleotide sequence ID" value="XM_054343582.1"/>
</dbReference>
<dbReference type="RefSeq" id="XP_054199558.1">
    <molecule id="P10646-1"/>
    <property type="nucleotide sequence ID" value="XM_054343583.1"/>
</dbReference>
<dbReference type="RefSeq" id="XP_054199559.1">
    <molecule id="P10646-1"/>
    <property type="nucleotide sequence ID" value="XM_054343584.1"/>
</dbReference>
<dbReference type="RefSeq" id="XP_054199560.1">
    <molecule id="P10646-1"/>
    <property type="nucleotide sequence ID" value="XM_054343585.1"/>
</dbReference>
<dbReference type="RefSeq" id="XP_054199561.1">
    <molecule id="P10646-2"/>
    <property type="nucleotide sequence ID" value="XM_054343586.1"/>
</dbReference>
<dbReference type="PDB" id="1ADZ">
    <property type="method" value="NMR"/>
    <property type="chains" value="A=118-182"/>
</dbReference>
<dbReference type="PDB" id="1IRH">
    <property type="method" value="NMR"/>
    <property type="chains" value="A=210-270"/>
</dbReference>
<dbReference type="PDB" id="1TFX">
    <property type="method" value="X-ray"/>
    <property type="resolution" value="2.60 A"/>
    <property type="chains" value="C/D=121-178"/>
</dbReference>
<dbReference type="PDB" id="4BQD">
    <property type="method" value="X-ray"/>
    <property type="resolution" value="2.48 A"/>
    <property type="chains" value="A/B=29-107"/>
</dbReference>
<dbReference type="PDB" id="4DTG">
    <property type="method" value="X-ray"/>
    <property type="resolution" value="1.80 A"/>
    <property type="chains" value="K=119-178"/>
</dbReference>
<dbReference type="PDB" id="5NMV">
    <property type="method" value="X-ray"/>
    <property type="resolution" value="1.65 A"/>
    <property type="chains" value="K=29-107"/>
</dbReference>
<dbReference type="PDB" id="6BX8">
    <property type="method" value="X-ray"/>
    <property type="resolution" value="1.98 A"/>
    <property type="chains" value="B/D/F/H=50-107"/>
</dbReference>
<dbReference type="PDB" id="7V1N">
    <property type="method" value="EM"/>
    <property type="resolution" value="3.20 A"/>
    <property type="chains" value="K=1-209"/>
</dbReference>
<dbReference type="PDBsum" id="1ADZ"/>
<dbReference type="PDBsum" id="1IRH"/>
<dbReference type="PDBsum" id="1TFX"/>
<dbReference type="PDBsum" id="4BQD"/>
<dbReference type="PDBsum" id="4DTG"/>
<dbReference type="PDBsum" id="5NMV"/>
<dbReference type="PDBsum" id="6BX8"/>
<dbReference type="PDBsum" id="7V1N"/>
<dbReference type="EMDB" id="EMD-31628"/>
<dbReference type="SMR" id="P10646"/>
<dbReference type="BioGRID" id="112893">
    <property type="interactions" value="27"/>
</dbReference>
<dbReference type="CORUM" id="P10646"/>
<dbReference type="FunCoup" id="P10646">
    <property type="interactions" value="265"/>
</dbReference>
<dbReference type="IntAct" id="P10646">
    <property type="interactions" value="2"/>
</dbReference>
<dbReference type="STRING" id="9606.ENSP00000233156"/>
<dbReference type="ChEMBL" id="CHEMBL3713062"/>
<dbReference type="DrugBank" id="DB14562">
    <property type="generic name" value="Andexanet alfa"/>
</dbReference>
<dbReference type="DrugBank" id="DB17725">
    <property type="generic name" value="Marstacimab"/>
</dbReference>
<dbReference type="MEROPS" id="I02.011"/>
<dbReference type="MEROPS" id="I02.012"/>
<dbReference type="MEROPS" id="I02.950"/>
<dbReference type="GlyConnect" id="602">
    <property type="glycosylation" value="12 N-Linked glycans, 1 O-Linked glycan"/>
</dbReference>
<dbReference type="GlyCosmos" id="P10646">
    <property type="glycosylation" value="5 sites, 24 glycans"/>
</dbReference>
<dbReference type="GlyGen" id="P10646">
    <property type="glycosylation" value="9 sites, 40 N-linked glycans (4 sites), 5 O-linked glycans (6 sites)"/>
</dbReference>
<dbReference type="iPTMnet" id="P10646"/>
<dbReference type="PhosphoSitePlus" id="P10646"/>
<dbReference type="BioMuta" id="TFPI"/>
<dbReference type="DMDM" id="125932"/>
<dbReference type="CPTAC" id="non-CPTAC-1163"/>
<dbReference type="jPOST" id="P10646"/>
<dbReference type="MassIVE" id="P10646"/>
<dbReference type="PaxDb" id="9606-ENSP00000233156"/>
<dbReference type="PeptideAtlas" id="P10646"/>
<dbReference type="ProteomicsDB" id="52636">
    <molecule id="P10646-1"/>
</dbReference>
<dbReference type="ProteomicsDB" id="52637">
    <molecule id="P10646-2"/>
</dbReference>
<dbReference type="Pumba" id="P10646"/>
<dbReference type="ABCD" id="P10646">
    <property type="antibodies" value="47 sequenced antibodies"/>
</dbReference>
<dbReference type="Antibodypedia" id="790">
    <property type="antibodies" value="1144 antibodies from 41 providers"/>
</dbReference>
<dbReference type="DNASU" id="7035"/>
<dbReference type="Ensembl" id="ENST00000233156.9">
    <molecule id="P10646-1"/>
    <property type="protein sequence ID" value="ENSP00000233156.3"/>
    <property type="gene ID" value="ENSG00000003436.16"/>
</dbReference>
<dbReference type="Ensembl" id="ENST00000339091.8">
    <molecule id="P10646-2"/>
    <property type="protein sequence ID" value="ENSP00000342306.4"/>
    <property type="gene ID" value="ENSG00000003436.16"/>
</dbReference>
<dbReference type="Ensembl" id="ENST00000392365.5">
    <molecule id="P10646-1"/>
    <property type="protein sequence ID" value="ENSP00000376172.1"/>
    <property type="gene ID" value="ENSG00000003436.16"/>
</dbReference>
<dbReference type="Ensembl" id="ENST00000409676.5">
    <molecule id="P10646-2"/>
    <property type="protein sequence ID" value="ENSP00000386344.1"/>
    <property type="gene ID" value="ENSG00000003436.16"/>
</dbReference>
<dbReference type="GeneID" id="7035"/>
<dbReference type="KEGG" id="hsa:7035"/>
<dbReference type="MANE-Select" id="ENST00000233156.9">
    <property type="protein sequence ID" value="ENSP00000233156.3"/>
    <property type="RefSeq nucleotide sequence ID" value="NM_006287.6"/>
    <property type="RefSeq protein sequence ID" value="NP_006278.1"/>
</dbReference>
<dbReference type="UCSC" id="uc002upy.4">
    <molecule id="P10646-1"/>
    <property type="organism name" value="human"/>
</dbReference>
<dbReference type="AGR" id="HGNC:11760"/>
<dbReference type="CTD" id="7035"/>
<dbReference type="DisGeNET" id="7035"/>
<dbReference type="GeneCards" id="TFPI"/>
<dbReference type="HGNC" id="HGNC:11760">
    <property type="gene designation" value="TFPI"/>
</dbReference>
<dbReference type="HPA" id="ENSG00000003436">
    <property type="expression patterns" value="Tissue enhanced (liver, placenta)"/>
</dbReference>
<dbReference type="MIM" id="152310">
    <property type="type" value="gene"/>
</dbReference>
<dbReference type="neXtProt" id="NX_P10646"/>
<dbReference type="OpenTargets" id="ENSG00000003436"/>
<dbReference type="PharmGKB" id="PA36475"/>
<dbReference type="VEuPathDB" id="HostDB:ENSG00000003436"/>
<dbReference type="eggNOG" id="KOG4295">
    <property type="taxonomic scope" value="Eukaryota"/>
</dbReference>
<dbReference type="GeneTree" id="ENSGT00940000160767"/>
<dbReference type="InParanoid" id="P10646"/>
<dbReference type="OMA" id="WWILCAV"/>
<dbReference type="OrthoDB" id="5950222at2759"/>
<dbReference type="PAN-GO" id="P10646">
    <property type="GO annotations" value="2 GO annotations based on evolutionary models"/>
</dbReference>
<dbReference type="PhylomeDB" id="P10646"/>
<dbReference type="TreeFam" id="TF315349"/>
<dbReference type="BioCyc" id="MetaCyc:ENSG00000003436-MONOMER"/>
<dbReference type="PathwayCommons" id="P10646"/>
<dbReference type="Reactome" id="R-HSA-140834">
    <property type="pathway name" value="Extrinsic Pathway of Fibrin Clot Formation"/>
</dbReference>
<dbReference type="SignaLink" id="P10646"/>
<dbReference type="SIGNOR" id="P10646"/>
<dbReference type="BioGRID-ORCS" id="7035">
    <property type="hits" value="19 hits in 1167 CRISPR screens"/>
</dbReference>
<dbReference type="ChiTaRS" id="TFPI">
    <property type="organism name" value="human"/>
</dbReference>
<dbReference type="EvolutionaryTrace" id="P10646"/>
<dbReference type="GeneWiki" id="Tissue_factor_pathway_inhibitor"/>
<dbReference type="GenomeRNAi" id="7035"/>
<dbReference type="Pharos" id="P10646">
    <property type="development level" value="Tchem"/>
</dbReference>
<dbReference type="PRO" id="PR:P10646"/>
<dbReference type="Proteomes" id="UP000005640">
    <property type="component" value="Chromosome 2"/>
</dbReference>
<dbReference type="RNAct" id="P10646">
    <property type="molecule type" value="protein"/>
</dbReference>
<dbReference type="Bgee" id="ENSG00000003436">
    <property type="expression patterns" value="Expressed in right lung and 180 other cell types or tissues"/>
</dbReference>
<dbReference type="ExpressionAtlas" id="P10646">
    <property type="expression patterns" value="baseline and differential"/>
</dbReference>
<dbReference type="GO" id="GO:0005901">
    <property type="term" value="C:caveola"/>
    <property type="evidence" value="ECO:0000314"/>
    <property type="project" value="UniProtKB"/>
</dbReference>
<dbReference type="GO" id="GO:0009986">
    <property type="term" value="C:cell surface"/>
    <property type="evidence" value="ECO:0000314"/>
    <property type="project" value="UniProtKB"/>
</dbReference>
<dbReference type="GO" id="GO:0005783">
    <property type="term" value="C:endoplasmic reticulum"/>
    <property type="evidence" value="ECO:0007669"/>
    <property type="project" value="UniProtKB-KW"/>
</dbReference>
<dbReference type="GO" id="GO:0005576">
    <property type="term" value="C:extracellular region"/>
    <property type="evidence" value="ECO:0000304"/>
    <property type="project" value="Reactome"/>
</dbReference>
<dbReference type="GO" id="GO:0005615">
    <property type="term" value="C:extracellular space"/>
    <property type="evidence" value="ECO:0000314"/>
    <property type="project" value="BHF-UCL"/>
</dbReference>
<dbReference type="GO" id="GO:0005886">
    <property type="term" value="C:plasma membrane"/>
    <property type="evidence" value="ECO:0000304"/>
    <property type="project" value="Reactome"/>
</dbReference>
<dbReference type="GO" id="GO:0098552">
    <property type="term" value="C:side of membrane"/>
    <property type="evidence" value="ECO:0007669"/>
    <property type="project" value="UniProtKB-KW"/>
</dbReference>
<dbReference type="GO" id="GO:0004866">
    <property type="term" value="F:endopeptidase inhibitor activity"/>
    <property type="evidence" value="ECO:0000304"/>
    <property type="project" value="ProtInc"/>
</dbReference>
<dbReference type="GO" id="GO:0004867">
    <property type="term" value="F:serine-type endopeptidase inhibitor activity"/>
    <property type="evidence" value="ECO:0000318"/>
    <property type="project" value="GO_Central"/>
</dbReference>
<dbReference type="GO" id="GO:0007596">
    <property type="term" value="P:blood coagulation"/>
    <property type="evidence" value="ECO:0000304"/>
    <property type="project" value="ProtInc"/>
</dbReference>
<dbReference type="GO" id="GO:0071383">
    <property type="term" value="P:cellular response to steroid hormone stimulus"/>
    <property type="evidence" value="ECO:0000270"/>
    <property type="project" value="UniProtKB"/>
</dbReference>
<dbReference type="GO" id="GO:0030195">
    <property type="term" value="P:negative regulation of blood coagulation"/>
    <property type="evidence" value="ECO:0000314"/>
    <property type="project" value="UniProtKB"/>
</dbReference>
<dbReference type="CDD" id="cd22613">
    <property type="entry name" value="Kunitz_TFPI1_1-like"/>
    <property type="match status" value="1"/>
</dbReference>
<dbReference type="CDD" id="cd22614">
    <property type="entry name" value="Kunitz_TFPI1_2-like"/>
    <property type="match status" value="1"/>
</dbReference>
<dbReference type="CDD" id="cd22615">
    <property type="entry name" value="Kunitz_TFPI1_TFPI2_3-like"/>
    <property type="match status" value="1"/>
</dbReference>
<dbReference type="FunFam" id="4.10.410.10:FF:000004">
    <property type="entry name" value="Tissue factor pathway inhibitor"/>
    <property type="match status" value="1"/>
</dbReference>
<dbReference type="FunFam" id="4.10.410.10:FF:000012">
    <property type="entry name" value="Tissue factor pathway inhibitor"/>
    <property type="match status" value="1"/>
</dbReference>
<dbReference type="FunFam" id="4.10.410.10:FF:000013">
    <property type="entry name" value="Tissue factor pathway inhibitor"/>
    <property type="match status" value="1"/>
</dbReference>
<dbReference type="Gene3D" id="4.10.410.10">
    <property type="entry name" value="Pancreatic trypsin inhibitor Kunitz domain"/>
    <property type="match status" value="3"/>
</dbReference>
<dbReference type="InterPro" id="IPR002223">
    <property type="entry name" value="Kunitz_BPTI"/>
</dbReference>
<dbReference type="InterPro" id="IPR036880">
    <property type="entry name" value="Kunitz_BPTI_sf"/>
</dbReference>
<dbReference type="InterPro" id="IPR020901">
    <property type="entry name" value="Prtase_inh_Kunz-CS"/>
</dbReference>
<dbReference type="InterPro" id="IPR008296">
    <property type="entry name" value="TFPI-like"/>
</dbReference>
<dbReference type="InterPro" id="IPR050098">
    <property type="entry name" value="TFPI/VKTCI-like"/>
</dbReference>
<dbReference type="PANTHER" id="PTHR10083">
    <property type="entry name" value="KUNITZ-TYPE PROTEASE INHIBITOR-RELATED"/>
    <property type="match status" value="1"/>
</dbReference>
<dbReference type="PANTHER" id="PTHR10083:SF328">
    <property type="entry name" value="TISSUE FACTOR PATHWAY INHIBITOR"/>
    <property type="match status" value="1"/>
</dbReference>
<dbReference type="Pfam" id="PF00014">
    <property type="entry name" value="Kunitz_BPTI"/>
    <property type="match status" value="3"/>
</dbReference>
<dbReference type="PIRSF" id="PIRSF001620">
    <property type="entry name" value="TFPI"/>
    <property type="match status" value="1"/>
</dbReference>
<dbReference type="PRINTS" id="PR00759">
    <property type="entry name" value="BASICPTASE"/>
</dbReference>
<dbReference type="SMART" id="SM00131">
    <property type="entry name" value="KU"/>
    <property type="match status" value="3"/>
</dbReference>
<dbReference type="SUPFAM" id="SSF57362">
    <property type="entry name" value="BPTI-like"/>
    <property type="match status" value="3"/>
</dbReference>
<dbReference type="PROSITE" id="PS00280">
    <property type="entry name" value="BPTI_KUNITZ_1"/>
    <property type="match status" value="3"/>
</dbReference>
<dbReference type="PROSITE" id="PS50279">
    <property type="entry name" value="BPTI_KUNITZ_2"/>
    <property type="match status" value="3"/>
</dbReference>
<proteinExistence type="evidence at protein level"/>